<comment type="function">
    <text evidence="1">FABPs are thought to play a role in the intracellular transport of long-chain fatty acids and their acyl-CoA esters.</text>
</comment>
<comment type="subcellular location">
    <subcellularLocation>
        <location>Cytoplasm</location>
    </subcellularLocation>
</comment>
<comment type="domain">
    <text evidence="1">Forms a beta-barrel structure that accommodates hydrophobic ligands in its interior.</text>
</comment>
<comment type="similarity">
    <text evidence="2">Belongs to the calycin superfamily. Fatty-acid binding protein (FABP) family.</text>
</comment>
<reference key="1">
    <citation type="submission" date="1995-07" db="EMBL/GenBank/DDBJ databases">
        <authorList>
            <person name="Morales M.H."/>
            <person name="Ortiz N.A."/>
            <person name="Cordero-Lopez N."/>
        </authorList>
    </citation>
    <scope>NUCLEOTIDE SEQUENCE [MRNA]</scope>
    <source>
        <tissue>Liver</tissue>
    </source>
</reference>
<protein>
    <recommendedName>
        <fullName>Fatty acid-binding protein, liver</fullName>
    </recommendedName>
    <alternativeName>
        <fullName>Liver basic FABP</fullName>
        <shortName>LB-FABP</shortName>
    </alternativeName>
    <alternativeName>
        <fullName>Liver-type fatty acid-binding protein</fullName>
        <shortName>L-FABP</shortName>
    </alternativeName>
</protein>
<dbReference type="EMBL" id="U28756">
    <property type="protein sequence ID" value="AAA68960.1"/>
    <property type="molecule type" value="mRNA"/>
</dbReference>
<dbReference type="SMR" id="Q90239"/>
<dbReference type="GO" id="GO:0005737">
    <property type="term" value="C:cytoplasm"/>
    <property type="evidence" value="ECO:0007669"/>
    <property type="project" value="UniProtKB-SubCell"/>
</dbReference>
<dbReference type="GO" id="GO:0008289">
    <property type="term" value="F:lipid binding"/>
    <property type="evidence" value="ECO:0007669"/>
    <property type="project" value="UniProtKB-KW"/>
</dbReference>
<dbReference type="FunFam" id="2.40.128.20:FF:000006">
    <property type="entry name" value="Fatty acid-binding protein, liver"/>
    <property type="match status" value="1"/>
</dbReference>
<dbReference type="Gene3D" id="2.40.128.20">
    <property type="match status" value="1"/>
</dbReference>
<dbReference type="InterPro" id="IPR012674">
    <property type="entry name" value="Calycin"/>
</dbReference>
<dbReference type="InterPro" id="IPR000463">
    <property type="entry name" value="Fatty_acid-bd"/>
</dbReference>
<dbReference type="InterPro" id="IPR031259">
    <property type="entry name" value="ILBP"/>
</dbReference>
<dbReference type="PANTHER" id="PTHR11955">
    <property type="entry name" value="FATTY ACID BINDING PROTEIN"/>
    <property type="match status" value="1"/>
</dbReference>
<dbReference type="Pfam" id="PF14651">
    <property type="entry name" value="Lipocalin_7"/>
    <property type="match status" value="1"/>
</dbReference>
<dbReference type="PRINTS" id="PR00178">
    <property type="entry name" value="FATTYACIDBP"/>
</dbReference>
<dbReference type="SUPFAM" id="SSF50814">
    <property type="entry name" value="Lipocalins"/>
    <property type="match status" value="1"/>
</dbReference>
<dbReference type="PROSITE" id="PS00214">
    <property type="entry name" value="FABP"/>
    <property type="match status" value="1"/>
</dbReference>
<sequence>MAFNGTWQVYSQENYEDFLKAIALPDDIIKAAKDVKPVTEIRQTGNTFVVTSKTPNKSVTNSFTLGKEADMTTMDGKKVKCTVNLVDGKLVAKSDKFIHEQEIVGNEMVETITSGSATFTRRSKKI</sequence>
<proteinExistence type="evidence at transcript level"/>
<organism>
    <name type="scientific">Anolis pulchellus</name>
    <name type="common">Common grass anole</name>
    <name type="synonym">Ctenonotus pulchellus</name>
    <dbReference type="NCBI Taxonomy" id="40675"/>
    <lineage>
        <taxon>Eukaryota</taxon>
        <taxon>Metazoa</taxon>
        <taxon>Chordata</taxon>
        <taxon>Craniata</taxon>
        <taxon>Vertebrata</taxon>
        <taxon>Euteleostomi</taxon>
        <taxon>Lepidosauria</taxon>
        <taxon>Squamata</taxon>
        <taxon>Bifurcata</taxon>
        <taxon>Unidentata</taxon>
        <taxon>Episquamata</taxon>
        <taxon>Toxicofera</taxon>
        <taxon>Iguania</taxon>
        <taxon>Dactyloidae</taxon>
        <taxon>Anolis</taxon>
    </lineage>
</organism>
<keyword id="KW-0963">Cytoplasm</keyword>
<keyword id="KW-0446">Lipid-binding</keyword>
<keyword id="KW-0813">Transport</keyword>
<evidence type="ECO:0000250" key="1"/>
<evidence type="ECO:0000305" key="2"/>
<name>FABPL_ANOPU</name>
<feature type="initiator methionine" description="Removed" evidence="1">
    <location>
        <position position="1"/>
    </location>
</feature>
<feature type="chain" id="PRO_0000067345" description="Fatty acid-binding protein, liver">
    <location>
        <begin position="2"/>
        <end position="126"/>
    </location>
</feature>
<feature type="binding site" evidence="1">
    <location>
        <begin position="54"/>
        <end position="56"/>
    </location>
    <ligand>
        <name>cholate</name>
        <dbReference type="ChEBI" id="CHEBI:29747"/>
        <label>1</label>
    </ligand>
</feature>
<feature type="binding site" evidence="1">
    <location>
        <begin position="99"/>
        <end position="101"/>
    </location>
    <ligand>
        <name>cholate</name>
        <dbReference type="ChEBI" id="CHEBI:29747"/>
        <label>2</label>
    </ligand>
</feature>
<feature type="binding site" evidence="1">
    <location>
        <position position="121"/>
    </location>
    <ligand>
        <name>cholate</name>
        <dbReference type="ChEBI" id="CHEBI:29747"/>
        <label>1</label>
    </ligand>
</feature>
<accession>Q90239</accession>